<gene>
    <name evidence="6" type="primary">inx-3</name>
    <name evidence="6" type="synonym">opu-3</name>
    <name evidence="6" type="ORF">F22F4.2</name>
</gene>
<evidence type="ECO:0000255" key="1">
    <source>
        <dbReference type="PROSITE-ProRule" id="PRU00351"/>
    </source>
</evidence>
<evidence type="ECO:0000256" key="2">
    <source>
        <dbReference type="SAM" id="MobiDB-lite"/>
    </source>
</evidence>
<evidence type="ECO:0000269" key="3">
    <source>
    </source>
</evidence>
<evidence type="ECO:0000269" key="4">
    <source>
    </source>
</evidence>
<evidence type="ECO:0000305" key="5"/>
<evidence type="ECO:0000312" key="6">
    <source>
        <dbReference type="WormBase" id="F22F4.2"/>
    </source>
</evidence>
<dbReference type="EMBL" id="U59211">
    <property type="protein sequence ID" value="AAB09670.1"/>
    <property type="molecule type" value="mRNA"/>
</dbReference>
<dbReference type="EMBL" id="BX284606">
    <property type="protein sequence ID" value="CCD63822.1"/>
    <property type="molecule type" value="Genomic_DNA"/>
</dbReference>
<dbReference type="PIR" id="T16141">
    <property type="entry name" value="T16141"/>
</dbReference>
<dbReference type="RefSeq" id="NP_509002.2">
    <property type="nucleotide sequence ID" value="NM_076601.6"/>
</dbReference>
<dbReference type="SMR" id="Q19746"/>
<dbReference type="BioGRID" id="45798">
    <property type="interactions" value="5"/>
</dbReference>
<dbReference type="FunCoup" id="Q19746">
    <property type="interactions" value="147"/>
</dbReference>
<dbReference type="IntAct" id="Q19746">
    <property type="interactions" value="1"/>
</dbReference>
<dbReference type="MINT" id="Q19746"/>
<dbReference type="STRING" id="6239.F22F4.2.1"/>
<dbReference type="TCDB" id="1.A.25.1.1">
    <property type="family name" value="the gap junction-forming innexin (innexin) family"/>
</dbReference>
<dbReference type="PaxDb" id="6239-F22F4.2"/>
<dbReference type="PeptideAtlas" id="Q19746"/>
<dbReference type="EnsemblMetazoa" id="F22F4.2.1">
    <property type="protein sequence ID" value="F22F4.2.1"/>
    <property type="gene ID" value="WBGene00002125"/>
</dbReference>
<dbReference type="GeneID" id="180866"/>
<dbReference type="KEGG" id="cel:CELE_F22F4.2"/>
<dbReference type="UCSC" id="F22F4.2">
    <property type="organism name" value="c. elegans"/>
</dbReference>
<dbReference type="AGR" id="WB:WBGene00002125"/>
<dbReference type="CTD" id="180866"/>
<dbReference type="WormBase" id="F22F4.2">
    <property type="protein sequence ID" value="CE33055"/>
    <property type="gene ID" value="WBGene00002125"/>
    <property type="gene designation" value="inx-3"/>
</dbReference>
<dbReference type="eggNOG" id="KOG3883">
    <property type="taxonomic scope" value="Eukaryota"/>
</dbReference>
<dbReference type="HOGENOM" id="CLU_035763_0_1_1"/>
<dbReference type="InParanoid" id="Q19746"/>
<dbReference type="OMA" id="LGDWWIL"/>
<dbReference type="OrthoDB" id="5867527at2759"/>
<dbReference type="PhylomeDB" id="Q19746"/>
<dbReference type="PRO" id="PR:Q19746"/>
<dbReference type="Proteomes" id="UP000001940">
    <property type="component" value="Chromosome X"/>
</dbReference>
<dbReference type="Bgee" id="WBGene00002125">
    <property type="expression patterns" value="Expressed in pharyngeal muscle cell (C elegans) and 4 other cell types or tissues"/>
</dbReference>
<dbReference type="GO" id="GO:0005737">
    <property type="term" value="C:cytoplasm"/>
    <property type="evidence" value="ECO:0000314"/>
    <property type="project" value="WormBase"/>
</dbReference>
<dbReference type="GO" id="GO:0005921">
    <property type="term" value="C:gap junction"/>
    <property type="evidence" value="ECO:0000314"/>
    <property type="project" value="UniProtKB"/>
</dbReference>
<dbReference type="GO" id="GO:0005886">
    <property type="term" value="C:plasma membrane"/>
    <property type="evidence" value="ECO:0000318"/>
    <property type="project" value="GO_Central"/>
</dbReference>
<dbReference type="GO" id="GO:0051015">
    <property type="term" value="F:actin filament binding"/>
    <property type="evidence" value="ECO:0000314"/>
    <property type="project" value="UniProtKB"/>
</dbReference>
<dbReference type="GO" id="GO:0005243">
    <property type="term" value="F:gap junction channel activity"/>
    <property type="evidence" value="ECO:0000315"/>
    <property type="project" value="UniProtKB"/>
</dbReference>
<dbReference type="GO" id="GO:0055077">
    <property type="term" value="F:gap junction hemi-channel activity"/>
    <property type="evidence" value="ECO:0000250"/>
    <property type="project" value="UniProtKB"/>
</dbReference>
<dbReference type="GO" id="GO:0048598">
    <property type="term" value="P:embryonic morphogenesis"/>
    <property type="evidence" value="ECO:0000315"/>
    <property type="project" value="WormBase"/>
</dbReference>
<dbReference type="GO" id="GO:0034220">
    <property type="term" value="P:monoatomic ion transmembrane transport"/>
    <property type="evidence" value="ECO:0007669"/>
    <property type="project" value="UniProtKB-KW"/>
</dbReference>
<dbReference type="GO" id="GO:1903746">
    <property type="term" value="P:positive regulation of nematode pharyngeal pumping"/>
    <property type="evidence" value="ECO:0000315"/>
    <property type="project" value="UniProtKB"/>
</dbReference>
<dbReference type="InterPro" id="IPR000990">
    <property type="entry name" value="Innexin"/>
</dbReference>
<dbReference type="PANTHER" id="PTHR11893">
    <property type="entry name" value="INNEXIN"/>
    <property type="match status" value="1"/>
</dbReference>
<dbReference type="PANTHER" id="PTHR11893:SF20">
    <property type="entry name" value="INNEXIN-3"/>
    <property type="match status" value="1"/>
</dbReference>
<dbReference type="Pfam" id="PF00876">
    <property type="entry name" value="Innexin"/>
    <property type="match status" value="1"/>
</dbReference>
<dbReference type="PRINTS" id="PR01262">
    <property type="entry name" value="INNEXIN"/>
</dbReference>
<dbReference type="PROSITE" id="PS51013">
    <property type="entry name" value="PANNEXIN"/>
    <property type="match status" value="1"/>
</dbReference>
<feature type="chain" id="PRO_0000208506" description="Innexin-3">
    <location>
        <begin position="1"/>
        <end position="420"/>
    </location>
</feature>
<feature type="transmembrane region" description="Helical" evidence="1">
    <location>
        <begin position="33"/>
        <end position="53"/>
    </location>
</feature>
<feature type="transmembrane region" description="Helical" evidence="1">
    <location>
        <begin position="104"/>
        <end position="124"/>
    </location>
</feature>
<feature type="transmembrane region" description="Helical" evidence="1">
    <location>
        <begin position="193"/>
        <end position="213"/>
    </location>
</feature>
<feature type="transmembrane region" description="Helical" evidence="1">
    <location>
        <begin position="278"/>
        <end position="298"/>
    </location>
</feature>
<feature type="region of interest" description="Disordered" evidence="2">
    <location>
        <begin position="378"/>
        <end position="405"/>
    </location>
</feature>
<feature type="compositionally biased region" description="Basic and acidic residues" evidence="2">
    <location>
        <begin position="395"/>
        <end position="405"/>
    </location>
</feature>
<name>INX3_CAEEL</name>
<keyword id="KW-0965">Cell junction</keyword>
<keyword id="KW-1003">Cell membrane</keyword>
<keyword id="KW-0303">Gap junction</keyword>
<keyword id="KW-0407">Ion channel</keyword>
<keyword id="KW-0406">Ion transport</keyword>
<keyword id="KW-0472">Membrane</keyword>
<keyword id="KW-1185">Reference proteome</keyword>
<keyword id="KW-0812">Transmembrane</keyword>
<keyword id="KW-1133">Transmembrane helix</keyword>
<keyword id="KW-0813">Transport</keyword>
<protein>
    <recommendedName>
        <fullName>Innexin-3</fullName>
    </recommendedName>
    <alternativeName>
        <fullName>Protein opu-3</fullName>
    </alternativeName>
</protein>
<proteinExistence type="evidence at protein level"/>
<organism>
    <name type="scientific">Caenorhabditis elegans</name>
    <dbReference type="NCBI Taxonomy" id="6239"/>
    <lineage>
        <taxon>Eukaryota</taxon>
        <taxon>Metazoa</taxon>
        <taxon>Ecdysozoa</taxon>
        <taxon>Nematoda</taxon>
        <taxon>Chromadorea</taxon>
        <taxon>Rhabditida</taxon>
        <taxon>Rhabditina</taxon>
        <taxon>Rhabditomorpha</taxon>
        <taxon>Rhabditoidea</taxon>
        <taxon>Rhabditidae</taxon>
        <taxon>Peloderinae</taxon>
        <taxon>Caenorhabditis</taxon>
    </lineage>
</organism>
<comment type="function">
    <text evidence="3 4">Structural component of gap junctions (PubMed:10381394, PubMed:33238150). Plays a role in maintaining gap junction activity to promote phayngeal muscle contraction (PubMed:33238150).</text>
</comment>
<comment type="subunit">
    <text evidence="4">Interacts with F-actin.</text>
</comment>
<comment type="subcellular location">
    <subcellularLocation>
        <location evidence="5">Cell membrane</location>
        <topology evidence="1">Multi-pass membrane protein</topology>
    </subcellularLocation>
    <subcellularLocation>
        <location evidence="4">Cell junction</location>
        <location evidence="4">Gap junction</location>
    </subcellularLocation>
    <text evidence="4">Partially co-localizes with F-actin at gap junctions between EA and EP endodermal precursor cells in embryos.</text>
</comment>
<comment type="tissue specificity">
    <text evidence="4">Evenly distributed along the adjoining membranes of the two pm5 pharyngeal muscle cells.</text>
</comment>
<comment type="developmental stage">
    <text evidence="4">Expressed during embryogenesis (PubMed:33238150). Expressed in EA and EP endodermal precursor cells at the 16-24 cell stage of embryogenesis (PubMed:33238150).</text>
</comment>
<comment type="disruption phenotype">
    <text evidence="4">RNAi-mediated knockdown impairs gap junction function in pharyngeal muscles which disrupts the synchronized muscle contraction between the pharyngeal metacorpus and terminal bulbs and thereby decreases the pharyngeal pumping rate.</text>
</comment>
<comment type="similarity">
    <text evidence="1">Belongs to the pannexin family.</text>
</comment>
<sequence length="420" mass="48917">MLGVPFIDRWLSETFKPKTFDDAVDRLSYVTTATLLAFFSIMVSCKQYVGSAIQCWMPMEFKGGWEQYAEDYCFIQNTFFIPERSEIPGDVEDRQKAEIGYYQWVPIVLAIQAFMFYLPSWIWSSLYKQCGLDFPSVISEAEALRSQDSETRTKGVNKLVDFIGDILDTRSKNEYGRFYCYRFGKGLGSMTSMLYICIKLMYLANVFVQFIILNKFLGNETFLWGFHTFADLYAGREWQDSGVFPRVTLCDFSVRKLANVHRYTVQCVLMINMFNEKIYLFIWFWFVFVLITTFINTLCTIYRLSFDSSRHNYIRSLLSGPVNNFKDEKAMIASFANNGLKQDGVLLMRFIDDHAGAMVTKEICEELFKKHGENLQHNRDFHHGHSTKSTSPGLEEGHHEHLYTPEKMKLMAPDYPIKHA</sequence>
<accession>Q19746</accession>
<accession>Q17393</accession>
<reference key="1">
    <citation type="journal article" date="1996" name="J. Cell Biol.">
        <title>eat-5 and unc-7 represent a multigene family in Caenorhabditis elegans involved in cell-cell coupling.</title>
        <authorList>
            <person name="Starich T.A."/>
            <person name="Lee R.Y."/>
            <person name="Panzarella C."/>
            <person name="Avery L."/>
            <person name="Shaw J.E."/>
        </authorList>
    </citation>
    <scope>NUCLEOTIDE SEQUENCE [MRNA]</scope>
</reference>
<reference key="2">
    <citation type="journal article" date="1998" name="Science">
        <title>Genome sequence of the nematode C. elegans: a platform for investigating biology.</title>
        <authorList>
            <consortium name="The C. elegans sequencing consortium"/>
        </authorList>
    </citation>
    <scope>NUCLEOTIDE SEQUENCE [LARGE SCALE GENOMIC DNA]</scope>
    <source>
        <strain>Bristol N2</strain>
    </source>
</reference>
<reference key="3">
    <citation type="journal article" date="1999" name="J. Cell Sci.">
        <title>Innexin-3 forms connexin-like intercellular channels.</title>
        <authorList>
            <person name="Landesman Y."/>
            <person name="White T.W."/>
            <person name="Starich T.A."/>
            <person name="Shaw J.E."/>
            <person name="Goodenough D.A."/>
            <person name="Paul D.L."/>
        </authorList>
    </citation>
    <scope>CHARACTERIZATION</scope>
</reference>
<reference key="4">
    <citation type="journal article" date="2020" name="Dev. Cell">
        <title>NLR-1/CASPR Anchors F-Actin to Promote Gap Junction Formation.</title>
        <authorList>
            <person name="Meng L."/>
            <person name="Yan D."/>
        </authorList>
    </citation>
    <scope>FUNCTION</scope>
    <scope>INTERACTION WITH F-ACTIN</scope>
    <scope>SUBCELLULAR LOCATION</scope>
    <scope>TISSUE SPECIFICITY</scope>
    <scope>DEVELOPMENTAL STAGE</scope>
    <scope>DISRUPTION PHENOTYPE</scope>
</reference>